<name>Y1032_TREPA</name>
<gene>
    <name type="ordered locus">TP_1032</name>
</gene>
<organism>
    <name type="scientific">Treponema pallidum (strain Nichols)</name>
    <dbReference type="NCBI Taxonomy" id="243276"/>
    <lineage>
        <taxon>Bacteria</taxon>
        <taxon>Pseudomonadati</taxon>
        <taxon>Spirochaetota</taxon>
        <taxon>Spirochaetia</taxon>
        <taxon>Spirochaetales</taxon>
        <taxon>Treponemataceae</taxon>
        <taxon>Treponema</taxon>
    </lineage>
</organism>
<accession>O83995</accession>
<comment type="subcellular location">
    <subcellularLocation>
        <location evidence="2">Membrane</location>
        <topology evidence="2">Single-pass membrane protein</topology>
    </subcellularLocation>
</comment>
<dbReference type="EMBL" id="AE000520">
    <property type="protein sequence ID" value="AAC65984.1"/>
    <property type="molecule type" value="Genomic_DNA"/>
</dbReference>
<dbReference type="PIR" id="C71252">
    <property type="entry name" value="C71252"/>
</dbReference>
<dbReference type="RefSeq" id="WP_010882476.1">
    <property type="nucleotide sequence ID" value="NC_021490.2"/>
</dbReference>
<dbReference type="SMR" id="O83995"/>
<dbReference type="IntAct" id="O83995">
    <property type="interactions" value="5"/>
</dbReference>
<dbReference type="STRING" id="243276.TP_1032"/>
<dbReference type="EnsemblBacteria" id="AAC65984">
    <property type="protein sequence ID" value="AAC65984"/>
    <property type="gene ID" value="TP_1032"/>
</dbReference>
<dbReference type="KEGG" id="tpa:TP_1032"/>
<dbReference type="KEGG" id="tpw:TPANIC_1032"/>
<dbReference type="eggNOG" id="COG5341">
    <property type="taxonomic scope" value="Bacteria"/>
</dbReference>
<dbReference type="HOGENOM" id="CLU_1795627_0_0_12"/>
<dbReference type="OrthoDB" id="47603at2"/>
<dbReference type="Proteomes" id="UP000000811">
    <property type="component" value="Chromosome"/>
</dbReference>
<dbReference type="GO" id="GO:0016020">
    <property type="term" value="C:membrane"/>
    <property type="evidence" value="ECO:0007669"/>
    <property type="project" value="UniProtKB-SubCell"/>
</dbReference>
<dbReference type="CDD" id="cd09910">
    <property type="entry name" value="NGN-insert_like"/>
    <property type="match status" value="1"/>
</dbReference>
<dbReference type="Gene3D" id="2.60.320.10">
    <property type="entry name" value="N-utilization substance G protein NusG, insert domain"/>
    <property type="match status" value="1"/>
</dbReference>
<dbReference type="InterPro" id="IPR038690">
    <property type="entry name" value="NusG_2_sf"/>
</dbReference>
<dbReference type="InterPro" id="IPR024045">
    <property type="entry name" value="NusG_dom2"/>
</dbReference>
<dbReference type="Pfam" id="PF07009">
    <property type="entry name" value="NusG_II"/>
    <property type="match status" value="1"/>
</dbReference>
<proteinExistence type="predicted"/>
<feature type="chain" id="PRO_0000202376" description="Uncharacterized protein TP_1032">
    <location>
        <begin position="1"/>
        <end position="144"/>
    </location>
</feature>
<feature type="transmembrane region" description="Helical" evidence="1">
    <location>
        <begin position="25"/>
        <end position="47"/>
    </location>
</feature>
<sequence length="144" mass="15442">MACGENERASTSPPNRAAAARGGRLTLLDGCCVALVLALTAWSGFFVYRMQGGARTLDIRCGAQRWTYPLDQERVIRVRGPLGETEIEIRAGAARVCRSPCANGTCIAHPPVQRVGEWNACLPNGVFLYVHGTDAAEPEADAVQ</sequence>
<reference key="1">
    <citation type="journal article" date="1998" name="Science">
        <title>Complete genome sequence of Treponema pallidum, the syphilis spirochete.</title>
        <authorList>
            <person name="Fraser C.M."/>
            <person name="Norris S.J."/>
            <person name="Weinstock G.M."/>
            <person name="White O."/>
            <person name="Sutton G.G."/>
            <person name="Dodson R.J."/>
            <person name="Gwinn M.L."/>
            <person name="Hickey E.K."/>
            <person name="Clayton R.A."/>
            <person name="Ketchum K.A."/>
            <person name="Sodergren E."/>
            <person name="Hardham J.M."/>
            <person name="McLeod M.P."/>
            <person name="Salzberg S.L."/>
            <person name="Peterson J.D."/>
            <person name="Khalak H.G."/>
            <person name="Richardson D.L."/>
            <person name="Howell J.K."/>
            <person name="Chidambaram M."/>
            <person name="Utterback T.R."/>
            <person name="McDonald L.A."/>
            <person name="Artiach P."/>
            <person name="Bowman C."/>
            <person name="Cotton M.D."/>
            <person name="Fujii C."/>
            <person name="Garland S.A."/>
            <person name="Hatch B."/>
            <person name="Horst K."/>
            <person name="Roberts K.M."/>
            <person name="Sandusky M."/>
            <person name="Weidman J.F."/>
            <person name="Smith H.O."/>
            <person name="Venter J.C."/>
        </authorList>
    </citation>
    <scope>NUCLEOTIDE SEQUENCE [LARGE SCALE GENOMIC DNA]</scope>
    <source>
        <strain>Nichols</strain>
    </source>
</reference>
<evidence type="ECO:0000255" key="1"/>
<evidence type="ECO:0000305" key="2"/>
<keyword id="KW-0472">Membrane</keyword>
<keyword id="KW-1185">Reference proteome</keyword>
<keyword id="KW-0812">Transmembrane</keyword>
<keyword id="KW-1133">Transmembrane helix</keyword>
<protein>
    <recommendedName>
        <fullName>Uncharacterized protein TP_1032</fullName>
    </recommendedName>
</protein>